<reference key="1">
    <citation type="journal article" date="2006" name="PLoS Genet.">
        <title>The complete genome sequence and comparative genome analysis of the high pathogenicity Yersinia enterocolitica strain 8081.</title>
        <authorList>
            <person name="Thomson N.R."/>
            <person name="Howard S."/>
            <person name="Wren B.W."/>
            <person name="Holden M.T.G."/>
            <person name="Crossman L."/>
            <person name="Challis G.L."/>
            <person name="Churcher C."/>
            <person name="Mungall K."/>
            <person name="Brooks K."/>
            <person name="Chillingworth T."/>
            <person name="Feltwell T."/>
            <person name="Abdellah Z."/>
            <person name="Hauser H."/>
            <person name="Jagels K."/>
            <person name="Maddison M."/>
            <person name="Moule S."/>
            <person name="Sanders M."/>
            <person name="Whitehead S."/>
            <person name="Quail M.A."/>
            <person name="Dougan G."/>
            <person name="Parkhill J."/>
            <person name="Prentice M.B."/>
        </authorList>
    </citation>
    <scope>NUCLEOTIDE SEQUENCE [LARGE SCALE GENOMIC DNA]</scope>
    <source>
        <strain>NCTC 13174 / 8081</strain>
    </source>
</reference>
<sequence>MWIGVISLFPEMFRAITDYGVTGRAVKNGLLSVQCWSPRDFTYDRHRTVDDRPYGGGPGMLMMVQPLREAIHAAKAAAGEGAKVIYLSPQGRKLDQQGVCELATNQKMILVCGRYEGVDERVIKTEIDEEWSIGDYVLSGGELPAMTLIDSVSRFIPGVLGHQASAEEDSFVDGLLDCPHYTRPEVLEGMEVPPVLLSGNHAEIRRWRLKQSLGRTWLRRPELLESLALTDEQMVLLAEFQREHKP</sequence>
<organism>
    <name type="scientific">Yersinia enterocolitica serotype O:8 / biotype 1B (strain NCTC 13174 / 8081)</name>
    <dbReference type="NCBI Taxonomy" id="393305"/>
    <lineage>
        <taxon>Bacteria</taxon>
        <taxon>Pseudomonadati</taxon>
        <taxon>Pseudomonadota</taxon>
        <taxon>Gammaproteobacteria</taxon>
        <taxon>Enterobacterales</taxon>
        <taxon>Yersiniaceae</taxon>
        <taxon>Yersinia</taxon>
    </lineage>
</organism>
<evidence type="ECO:0000255" key="1">
    <source>
        <dbReference type="HAMAP-Rule" id="MF_00605"/>
    </source>
</evidence>
<dbReference type="EC" id="2.1.1.228" evidence="1"/>
<dbReference type="EMBL" id="AM286415">
    <property type="protein sequence ID" value="CAL10945.1"/>
    <property type="molecule type" value="Genomic_DNA"/>
</dbReference>
<dbReference type="RefSeq" id="WP_004393426.1">
    <property type="nucleotide sequence ID" value="NC_008800.1"/>
</dbReference>
<dbReference type="RefSeq" id="YP_001005183.1">
    <property type="nucleotide sequence ID" value="NC_008800.1"/>
</dbReference>
<dbReference type="SMR" id="A1JK25"/>
<dbReference type="GeneID" id="97457407"/>
<dbReference type="KEGG" id="yen:YE0845"/>
<dbReference type="PATRIC" id="fig|393305.7.peg.939"/>
<dbReference type="eggNOG" id="COG0336">
    <property type="taxonomic scope" value="Bacteria"/>
</dbReference>
<dbReference type="HOGENOM" id="CLU_047363_0_1_6"/>
<dbReference type="OrthoDB" id="9807416at2"/>
<dbReference type="Proteomes" id="UP000000642">
    <property type="component" value="Chromosome"/>
</dbReference>
<dbReference type="GO" id="GO:0005829">
    <property type="term" value="C:cytosol"/>
    <property type="evidence" value="ECO:0007669"/>
    <property type="project" value="TreeGrafter"/>
</dbReference>
<dbReference type="GO" id="GO:0052906">
    <property type="term" value="F:tRNA (guanine(37)-N1)-methyltransferase activity"/>
    <property type="evidence" value="ECO:0007669"/>
    <property type="project" value="UniProtKB-UniRule"/>
</dbReference>
<dbReference type="GO" id="GO:0002939">
    <property type="term" value="P:tRNA N1-guanine methylation"/>
    <property type="evidence" value="ECO:0007669"/>
    <property type="project" value="TreeGrafter"/>
</dbReference>
<dbReference type="CDD" id="cd18080">
    <property type="entry name" value="TrmD-like"/>
    <property type="match status" value="1"/>
</dbReference>
<dbReference type="FunFam" id="1.10.1270.20:FF:000001">
    <property type="entry name" value="tRNA (guanine-N(1)-)-methyltransferase"/>
    <property type="match status" value="1"/>
</dbReference>
<dbReference type="FunFam" id="3.40.1280.10:FF:000001">
    <property type="entry name" value="tRNA (guanine-N(1)-)-methyltransferase"/>
    <property type="match status" value="1"/>
</dbReference>
<dbReference type="Gene3D" id="3.40.1280.10">
    <property type="match status" value="1"/>
</dbReference>
<dbReference type="Gene3D" id="1.10.1270.20">
    <property type="entry name" value="tRNA(m1g37)methyltransferase, domain 2"/>
    <property type="match status" value="1"/>
</dbReference>
<dbReference type="HAMAP" id="MF_00605">
    <property type="entry name" value="TrmD"/>
    <property type="match status" value="1"/>
</dbReference>
<dbReference type="InterPro" id="IPR029028">
    <property type="entry name" value="Alpha/beta_knot_MTases"/>
</dbReference>
<dbReference type="InterPro" id="IPR023148">
    <property type="entry name" value="tRNA_m1G_MeTrfase_C_sf"/>
</dbReference>
<dbReference type="InterPro" id="IPR002649">
    <property type="entry name" value="tRNA_m1G_MeTrfase_TrmD"/>
</dbReference>
<dbReference type="InterPro" id="IPR029026">
    <property type="entry name" value="tRNA_m1G_MTases_N"/>
</dbReference>
<dbReference type="InterPro" id="IPR016009">
    <property type="entry name" value="tRNA_MeTrfase_TRMD/TRM10"/>
</dbReference>
<dbReference type="NCBIfam" id="NF000648">
    <property type="entry name" value="PRK00026.1"/>
    <property type="match status" value="1"/>
</dbReference>
<dbReference type="NCBIfam" id="TIGR00088">
    <property type="entry name" value="trmD"/>
    <property type="match status" value="1"/>
</dbReference>
<dbReference type="PANTHER" id="PTHR46417">
    <property type="entry name" value="TRNA (GUANINE-N(1)-)-METHYLTRANSFERASE"/>
    <property type="match status" value="1"/>
</dbReference>
<dbReference type="PANTHER" id="PTHR46417:SF1">
    <property type="entry name" value="TRNA (GUANINE-N(1)-)-METHYLTRANSFERASE"/>
    <property type="match status" value="1"/>
</dbReference>
<dbReference type="Pfam" id="PF01746">
    <property type="entry name" value="tRNA_m1G_MT"/>
    <property type="match status" value="1"/>
</dbReference>
<dbReference type="PIRSF" id="PIRSF000386">
    <property type="entry name" value="tRNA_mtase"/>
    <property type="match status" value="1"/>
</dbReference>
<dbReference type="SUPFAM" id="SSF75217">
    <property type="entry name" value="alpha/beta knot"/>
    <property type="match status" value="1"/>
</dbReference>
<gene>
    <name evidence="1" type="primary">trmD</name>
    <name type="ordered locus">YE0845</name>
</gene>
<name>TRMD_YERE8</name>
<feature type="chain" id="PRO_1000006541" description="tRNA (guanine-N(1)-)-methyltransferase">
    <location>
        <begin position="1"/>
        <end position="246"/>
    </location>
</feature>
<feature type="binding site" evidence="1">
    <location>
        <position position="113"/>
    </location>
    <ligand>
        <name>S-adenosyl-L-methionine</name>
        <dbReference type="ChEBI" id="CHEBI:59789"/>
    </ligand>
</feature>
<feature type="binding site" evidence="1">
    <location>
        <begin position="133"/>
        <end position="138"/>
    </location>
    <ligand>
        <name>S-adenosyl-L-methionine</name>
        <dbReference type="ChEBI" id="CHEBI:59789"/>
    </ligand>
</feature>
<keyword id="KW-0963">Cytoplasm</keyword>
<keyword id="KW-0489">Methyltransferase</keyword>
<keyword id="KW-0949">S-adenosyl-L-methionine</keyword>
<keyword id="KW-0808">Transferase</keyword>
<keyword id="KW-0819">tRNA processing</keyword>
<comment type="function">
    <text evidence="1">Specifically methylates guanosine-37 in various tRNAs.</text>
</comment>
<comment type="catalytic activity">
    <reaction evidence="1">
        <text>guanosine(37) in tRNA + S-adenosyl-L-methionine = N(1)-methylguanosine(37) in tRNA + S-adenosyl-L-homocysteine + H(+)</text>
        <dbReference type="Rhea" id="RHEA:36899"/>
        <dbReference type="Rhea" id="RHEA-COMP:10145"/>
        <dbReference type="Rhea" id="RHEA-COMP:10147"/>
        <dbReference type="ChEBI" id="CHEBI:15378"/>
        <dbReference type="ChEBI" id="CHEBI:57856"/>
        <dbReference type="ChEBI" id="CHEBI:59789"/>
        <dbReference type="ChEBI" id="CHEBI:73542"/>
        <dbReference type="ChEBI" id="CHEBI:74269"/>
        <dbReference type="EC" id="2.1.1.228"/>
    </reaction>
</comment>
<comment type="subunit">
    <text evidence="1">Homodimer.</text>
</comment>
<comment type="subcellular location">
    <subcellularLocation>
        <location evidence="1">Cytoplasm</location>
    </subcellularLocation>
</comment>
<comment type="similarity">
    <text evidence="1">Belongs to the RNA methyltransferase TrmD family.</text>
</comment>
<protein>
    <recommendedName>
        <fullName evidence="1">tRNA (guanine-N(1)-)-methyltransferase</fullName>
        <ecNumber evidence="1">2.1.1.228</ecNumber>
    </recommendedName>
    <alternativeName>
        <fullName evidence="1">M1G-methyltransferase</fullName>
    </alternativeName>
    <alternativeName>
        <fullName evidence="1">tRNA [GM37] methyltransferase</fullName>
    </alternativeName>
</protein>
<accession>A1JK25</accession>
<proteinExistence type="inferred from homology"/>